<feature type="chain" id="PRO_0000252555" description="Large ribosomal subunit protein bL19">
    <location>
        <begin position="1"/>
        <end position="127"/>
    </location>
</feature>
<evidence type="ECO:0000255" key="1">
    <source>
        <dbReference type="HAMAP-Rule" id="MF_00402"/>
    </source>
</evidence>
<evidence type="ECO:0000305" key="2"/>
<keyword id="KW-0687">Ribonucleoprotein</keyword>
<keyword id="KW-0689">Ribosomal protein</keyword>
<reference key="1">
    <citation type="journal article" date="2007" name="ISME J.">
        <title>Population level functional diversity in a microbial community revealed by comparative genomic and metagenomic analyses.</title>
        <authorList>
            <person name="Bhaya D."/>
            <person name="Grossman A.R."/>
            <person name="Steunou A.-S."/>
            <person name="Khuri N."/>
            <person name="Cohan F.M."/>
            <person name="Hamamura N."/>
            <person name="Melendrez M.C."/>
            <person name="Bateson M.M."/>
            <person name="Ward D.M."/>
            <person name="Heidelberg J.F."/>
        </authorList>
    </citation>
    <scope>NUCLEOTIDE SEQUENCE [LARGE SCALE GENOMIC DNA]</scope>
    <source>
        <strain>JA-3-3Ab</strain>
    </source>
</reference>
<proteinExistence type="inferred from homology"/>
<comment type="function">
    <text evidence="1">This protein is located at the 30S-50S ribosomal subunit interface and may play a role in the structure and function of the aminoacyl-tRNA binding site.</text>
</comment>
<comment type="similarity">
    <text evidence="1">Belongs to the bacterial ribosomal protein bL19 family.</text>
</comment>
<organism>
    <name type="scientific">Synechococcus sp. (strain JA-3-3Ab)</name>
    <name type="common">Cyanobacteria bacterium Yellowstone A-Prime</name>
    <dbReference type="NCBI Taxonomy" id="321327"/>
    <lineage>
        <taxon>Bacteria</taxon>
        <taxon>Bacillati</taxon>
        <taxon>Cyanobacteriota</taxon>
        <taxon>Cyanophyceae</taxon>
        <taxon>Synechococcales</taxon>
        <taxon>Synechococcaceae</taxon>
        <taxon>Synechococcus</taxon>
    </lineage>
</organism>
<gene>
    <name evidence="1" type="primary">rplS</name>
    <name evidence="1" type="synonym">rpl19</name>
    <name type="ordered locus">CYA_1619</name>
</gene>
<dbReference type="EMBL" id="CP000239">
    <property type="protein sequence ID" value="ABC99779.1"/>
    <property type="molecule type" value="Genomic_DNA"/>
</dbReference>
<dbReference type="SMR" id="Q2JU45"/>
<dbReference type="STRING" id="321327.CYA_1619"/>
<dbReference type="KEGG" id="cya:CYA_1619"/>
<dbReference type="eggNOG" id="COG0335">
    <property type="taxonomic scope" value="Bacteria"/>
</dbReference>
<dbReference type="HOGENOM" id="CLU_103507_2_0_3"/>
<dbReference type="Proteomes" id="UP000008818">
    <property type="component" value="Chromosome"/>
</dbReference>
<dbReference type="GO" id="GO:0022625">
    <property type="term" value="C:cytosolic large ribosomal subunit"/>
    <property type="evidence" value="ECO:0007669"/>
    <property type="project" value="TreeGrafter"/>
</dbReference>
<dbReference type="GO" id="GO:0003735">
    <property type="term" value="F:structural constituent of ribosome"/>
    <property type="evidence" value="ECO:0007669"/>
    <property type="project" value="InterPro"/>
</dbReference>
<dbReference type="GO" id="GO:0006412">
    <property type="term" value="P:translation"/>
    <property type="evidence" value="ECO:0007669"/>
    <property type="project" value="UniProtKB-UniRule"/>
</dbReference>
<dbReference type="FunFam" id="2.30.30.790:FF:000001">
    <property type="entry name" value="50S ribosomal protein L19"/>
    <property type="match status" value="1"/>
</dbReference>
<dbReference type="Gene3D" id="2.30.30.790">
    <property type="match status" value="1"/>
</dbReference>
<dbReference type="HAMAP" id="MF_00402">
    <property type="entry name" value="Ribosomal_bL19"/>
    <property type="match status" value="1"/>
</dbReference>
<dbReference type="InterPro" id="IPR001857">
    <property type="entry name" value="Ribosomal_bL19"/>
</dbReference>
<dbReference type="InterPro" id="IPR018257">
    <property type="entry name" value="Ribosomal_bL19_CS"/>
</dbReference>
<dbReference type="InterPro" id="IPR038657">
    <property type="entry name" value="Ribosomal_bL19_sf"/>
</dbReference>
<dbReference type="InterPro" id="IPR008991">
    <property type="entry name" value="Translation_prot_SH3-like_sf"/>
</dbReference>
<dbReference type="NCBIfam" id="TIGR01024">
    <property type="entry name" value="rplS_bact"/>
    <property type="match status" value="1"/>
</dbReference>
<dbReference type="PANTHER" id="PTHR15680:SF9">
    <property type="entry name" value="LARGE RIBOSOMAL SUBUNIT PROTEIN BL19M"/>
    <property type="match status" value="1"/>
</dbReference>
<dbReference type="PANTHER" id="PTHR15680">
    <property type="entry name" value="RIBOSOMAL PROTEIN L19"/>
    <property type="match status" value="1"/>
</dbReference>
<dbReference type="Pfam" id="PF01245">
    <property type="entry name" value="Ribosomal_L19"/>
    <property type="match status" value="1"/>
</dbReference>
<dbReference type="PIRSF" id="PIRSF002191">
    <property type="entry name" value="Ribosomal_L19"/>
    <property type="match status" value="1"/>
</dbReference>
<dbReference type="PRINTS" id="PR00061">
    <property type="entry name" value="RIBOSOMALL19"/>
</dbReference>
<dbReference type="SUPFAM" id="SSF50104">
    <property type="entry name" value="Translation proteins SH3-like domain"/>
    <property type="match status" value="1"/>
</dbReference>
<dbReference type="PROSITE" id="PS01015">
    <property type="entry name" value="RIBOSOMAL_L19"/>
    <property type="match status" value="1"/>
</dbReference>
<name>RL19_SYNJA</name>
<accession>Q2JU45</accession>
<protein>
    <recommendedName>
        <fullName evidence="1">Large ribosomal subunit protein bL19</fullName>
    </recommendedName>
    <alternativeName>
        <fullName evidence="2">50S ribosomal protein L19</fullName>
    </alternativeName>
</protein>
<sequence>MNARINAEEIIRSIEAAHMKSDLPEIHVGDQVRVGVRIQEGGKERVQAFEGTVIAMRHSGCNRTITVRKIFQGIGVERVFLVHSPRIDSIQVLRRGKVRRAKLFYLRNRVGKATRIKAKTDSKEETL</sequence>